<reference key="1">
    <citation type="submission" date="2005-10" db="EMBL/GenBank/DDBJ databases">
        <title>Complete sequence of Pelobacter carbinolicus DSM 2380.</title>
        <authorList>
            <person name="Copeland A."/>
            <person name="Lucas S."/>
            <person name="Lapidus A."/>
            <person name="Barry K."/>
            <person name="Detter J.C."/>
            <person name="Glavina T."/>
            <person name="Hammon N."/>
            <person name="Israni S."/>
            <person name="Pitluck S."/>
            <person name="Chertkov O."/>
            <person name="Schmutz J."/>
            <person name="Larimer F."/>
            <person name="Land M."/>
            <person name="Kyrpides N."/>
            <person name="Ivanova N."/>
            <person name="Richardson P."/>
        </authorList>
    </citation>
    <scope>NUCLEOTIDE SEQUENCE [LARGE SCALE GENOMIC DNA]</scope>
    <source>
        <strain>DSM 2380 / NBRC 103641 / GraBd1</strain>
    </source>
</reference>
<gene>
    <name evidence="1" type="primary">lon1</name>
    <name type="ordered locus">Pcar_0591</name>
</gene>
<sequence>MTDDRDKTNEDPEKIIEADFNPEDPDDADIAEDAKEGLVVATDVLPSTLPIIPLRPRPAFPGILTPMVFTGEKHVALAKRAVDTPSKMMGLVLAKEVDEPDSLENLHRFGVVGRVMKVLHTDDDSIHLLVNCLERFSIRELTESEEGLFARVDYHYATELSVNPELKAYSMAIITTLKELVQINPLYSEEIKMFLNRQSMDDPGRLTDFAANLTSGDGQLLQEILETIDVRNRIDKVLVLLKKELEVSRLQTKISKQIEQKVSAQQREFFLREQLKAIKKELGLEKEGKVSEIEKYQKRLKNLTLSEEAQKTIDEEIEKLRLIEPSSPEYNVSRNYLDWLTILPWGKFSKDNYNIERARRVLDRDHYGLKDVKDRILEFIAVGMLKGDISGSILCLVGPPGVGKTSIGKSIAAALNRTFYRFSLGGMRDEAEIKGHRRTYIGAMPGRFIQAMKSAGTANPVLMLDEIDKVGASFQGDPASALLEVLDPEQNSSFRDHYLDVPFDLSNVLFVATANQLDTIPAPLLDRMEIIRLAGYILEEKLEIARRYLIPKALENHGLKKGQVTIRKDALRAIIDGYAREAGVRNLENRIKKIMRHAAMEFSQGRTDKITVSKKDVAAILGKPIFTEEEVFEDVPGVVTGLAWTSMGGATLQIEATAMPSRNKGFKQTGQLGKVMVESSDIAYSYVMAHLEEYGADPEFFDKHFVHLHVPAGATPKDGPSAGVTMATALLSMITGKPVIKKLGMTGELTLTGKVLPIGGVKEKIIAVKRIGLTTVILPEANRKDFEELPDHLRENLSVHFAGDYRDVYQVAFG</sequence>
<comment type="function">
    <text evidence="1">ATP-dependent serine protease that mediates the selective degradation of mutant and abnormal proteins as well as certain short-lived regulatory proteins. Required for cellular homeostasis and for survival from DNA damage and developmental changes induced by stress. Degrades polypeptides processively to yield small peptide fragments that are 5 to 10 amino acids long. Binds to DNA in a double-stranded, site-specific manner.</text>
</comment>
<comment type="catalytic activity">
    <reaction evidence="1">
        <text>Hydrolysis of proteins in presence of ATP.</text>
        <dbReference type="EC" id="3.4.21.53"/>
    </reaction>
</comment>
<comment type="subunit">
    <text evidence="1">Homohexamer. Organized in a ring with a central cavity.</text>
</comment>
<comment type="subcellular location">
    <subcellularLocation>
        <location evidence="1">Cytoplasm</location>
    </subcellularLocation>
</comment>
<comment type="induction">
    <text evidence="1">By heat shock.</text>
</comment>
<comment type="similarity">
    <text evidence="1">Belongs to the peptidase S16 family.</text>
</comment>
<accession>Q3A701</accession>
<proteinExistence type="inferred from homology"/>
<organism>
    <name type="scientific">Syntrophotalea carbinolica (strain DSM 2380 / NBRC 103641 / GraBd1)</name>
    <name type="common">Pelobacter carbinolicus</name>
    <dbReference type="NCBI Taxonomy" id="338963"/>
    <lineage>
        <taxon>Bacteria</taxon>
        <taxon>Pseudomonadati</taxon>
        <taxon>Thermodesulfobacteriota</taxon>
        <taxon>Desulfuromonadia</taxon>
        <taxon>Desulfuromonadales</taxon>
        <taxon>Syntrophotaleaceae</taxon>
        <taxon>Syntrophotalea</taxon>
    </lineage>
</organism>
<protein>
    <recommendedName>
        <fullName evidence="1">Lon protease 1</fullName>
        <ecNumber evidence="1">3.4.21.53</ecNumber>
    </recommendedName>
    <alternativeName>
        <fullName evidence="1">ATP-dependent protease La 1</fullName>
    </alternativeName>
</protein>
<feature type="chain" id="PRO_0000396591" description="Lon protease 1">
    <location>
        <begin position="1"/>
        <end position="814"/>
    </location>
</feature>
<feature type="domain" description="Lon N-terminal" evidence="3">
    <location>
        <begin position="49"/>
        <end position="245"/>
    </location>
</feature>
<feature type="domain" description="Lon proteolytic" evidence="2">
    <location>
        <begin position="633"/>
        <end position="814"/>
    </location>
</feature>
<feature type="region of interest" description="Disordered" evidence="4">
    <location>
        <begin position="1"/>
        <end position="28"/>
    </location>
</feature>
<feature type="compositionally biased region" description="Basic and acidic residues" evidence="4">
    <location>
        <begin position="1"/>
        <end position="17"/>
    </location>
</feature>
<feature type="active site" evidence="1">
    <location>
        <position position="721"/>
    </location>
</feature>
<feature type="active site" evidence="1">
    <location>
        <position position="764"/>
    </location>
</feature>
<feature type="binding site" evidence="1">
    <location>
        <begin position="398"/>
        <end position="405"/>
    </location>
    <ligand>
        <name>ATP</name>
        <dbReference type="ChEBI" id="CHEBI:30616"/>
    </ligand>
</feature>
<evidence type="ECO:0000255" key="1">
    <source>
        <dbReference type="HAMAP-Rule" id="MF_01973"/>
    </source>
</evidence>
<evidence type="ECO:0000255" key="2">
    <source>
        <dbReference type="PROSITE-ProRule" id="PRU01122"/>
    </source>
</evidence>
<evidence type="ECO:0000255" key="3">
    <source>
        <dbReference type="PROSITE-ProRule" id="PRU01123"/>
    </source>
</evidence>
<evidence type="ECO:0000256" key="4">
    <source>
        <dbReference type="SAM" id="MobiDB-lite"/>
    </source>
</evidence>
<dbReference type="EC" id="3.4.21.53" evidence="1"/>
<dbReference type="EMBL" id="CP000142">
    <property type="protein sequence ID" value="ABA87850.1"/>
    <property type="molecule type" value="Genomic_DNA"/>
</dbReference>
<dbReference type="RefSeq" id="WP_011340291.1">
    <property type="nucleotide sequence ID" value="NC_007498.2"/>
</dbReference>
<dbReference type="SMR" id="Q3A701"/>
<dbReference type="STRING" id="338963.Pcar_0591"/>
<dbReference type="KEGG" id="pca:Pcar_0591"/>
<dbReference type="eggNOG" id="COG0466">
    <property type="taxonomic scope" value="Bacteria"/>
</dbReference>
<dbReference type="HOGENOM" id="CLU_004109_4_3_7"/>
<dbReference type="OrthoDB" id="9803599at2"/>
<dbReference type="Proteomes" id="UP000002534">
    <property type="component" value="Chromosome"/>
</dbReference>
<dbReference type="GO" id="GO:0005737">
    <property type="term" value="C:cytoplasm"/>
    <property type="evidence" value="ECO:0007669"/>
    <property type="project" value="UniProtKB-SubCell"/>
</dbReference>
<dbReference type="GO" id="GO:0005524">
    <property type="term" value="F:ATP binding"/>
    <property type="evidence" value="ECO:0007669"/>
    <property type="project" value="UniProtKB-UniRule"/>
</dbReference>
<dbReference type="GO" id="GO:0016887">
    <property type="term" value="F:ATP hydrolysis activity"/>
    <property type="evidence" value="ECO:0007669"/>
    <property type="project" value="UniProtKB-UniRule"/>
</dbReference>
<dbReference type="GO" id="GO:0004176">
    <property type="term" value="F:ATP-dependent peptidase activity"/>
    <property type="evidence" value="ECO:0007669"/>
    <property type="project" value="UniProtKB-UniRule"/>
</dbReference>
<dbReference type="GO" id="GO:0043565">
    <property type="term" value="F:sequence-specific DNA binding"/>
    <property type="evidence" value="ECO:0007669"/>
    <property type="project" value="UniProtKB-UniRule"/>
</dbReference>
<dbReference type="GO" id="GO:0004252">
    <property type="term" value="F:serine-type endopeptidase activity"/>
    <property type="evidence" value="ECO:0007669"/>
    <property type="project" value="UniProtKB-UniRule"/>
</dbReference>
<dbReference type="GO" id="GO:0034605">
    <property type="term" value="P:cellular response to heat"/>
    <property type="evidence" value="ECO:0007669"/>
    <property type="project" value="UniProtKB-UniRule"/>
</dbReference>
<dbReference type="GO" id="GO:0006515">
    <property type="term" value="P:protein quality control for misfolded or incompletely synthesized proteins"/>
    <property type="evidence" value="ECO:0007669"/>
    <property type="project" value="UniProtKB-UniRule"/>
</dbReference>
<dbReference type="CDD" id="cd19500">
    <property type="entry name" value="RecA-like_Lon"/>
    <property type="match status" value="1"/>
</dbReference>
<dbReference type="FunFam" id="3.40.50.300:FF:000021">
    <property type="entry name" value="Lon protease homolog"/>
    <property type="match status" value="1"/>
</dbReference>
<dbReference type="FunFam" id="1.20.5.5270:FF:000001">
    <property type="entry name" value="Lon protease homolog, mitochondrial"/>
    <property type="match status" value="1"/>
</dbReference>
<dbReference type="FunFam" id="1.20.58.1480:FF:000002">
    <property type="entry name" value="Lon protease homolog, mitochondrial"/>
    <property type="match status" value="1"/>
</dbReference>
<dbReference type="Gene3D" id="1.10.8.60">
    <property type="match status" value="1"/>
</dbReference>
<dbReference type="Gene3D" id="1.20.5.5270">
    <property type="match status" value="1"/>
</dbReference>
<dbReference type="Gene3D" id="1.20.58.1480">
    <property type="match status" value="1"/>
</dbReference>
<dbReference type="Gene3D" id="3.30.230.10">
    <property type="match status" value="1"/>
</dbReference>
<dbReference type="Gene3D" id="2.30.130.40">
    <property type="entry name" value="LON domain-like"/>
    <property type="match status" value="1"/>
</dbReference>
<dbReference type="Gene3D" id="3.40.50.300">
    <property type="entry name" value="P-loop containing nucleotide triphosphate hydrolases"/>
    <property type="match status" value="1"/>
</dbReference>
<dbReference type="HAMAP" id="MF_01973">
    <property type="entry name" value="lon_bact"/>
    <property type="match status" value="1"/>
</dbReference>
<dbReference type="InterPro" id="IPR003593">
    <property type="entry name" value="AAA+_ATPase"/>
</dbReference>
<dbReference type="InterPro" id="IPR003959">
    <property type="entry name" value="ATPase_AAA_core"/>
</dbReference>
<dbReference type="InterPro" id="IPR027543">
    <property type="entry name" value="Lon_bac"/>
</dbReference>
<dbReference type="InterPro" id="IPR004815">
    <property type="entry name" value="Lon_bac/euk-typ"/>
</dbReference>
<dbReference type="InterPro" id="IPR054594">
    <property type="entry name" value="Lon_lid"/>
</dbReference>
<dbReference type="InterPro" id="IPR008269">
    <property type="entry name" value="Lon_proteolytic"/>
</dbReference>
<dbReference type="InterPro" id="IPR027065">
    <property type="entry name" value="Lon_Prtase"/>
</dbReference>
<dbReference type="InterPro" id="IPR003111">
    <property type="entry name" value="Lon_prtase_N"/>
</dbReference>
<dbReference type="InterPro" id="IPR046336">
    <property type="entry name" value="Lon_prtase_N_sf"/>
</dbReference>
<dbReference type="InterPro" id="IPR027417">
    <property type="entry name" value="P-loop_NTPase"/>
</dbReference>
<dbReference type="InterPro" id="IPR008268">
    <property type="entry name" value="Peptidase_S16_AS"/>
</dbReference>
<dbReference type="InterPro" id="IPR015947">
    <property type="entry name" value="PUA-like_sf"/>
</dbReference>
<dbReference type="InterPro" id="IPR020568">
    <property type="entry name" value="Ribosomal_Su5_D2-typ_SF"/>
</dbReference>
<dbReference type="InterPro" id="IPR014721">
    <property type="entry name" value="Ribsml_uS5_D2-typ_fold_subgr"/>
</dbReference>
<dbReference type="NCBIfam" id="TIGR00763">
    <property type="entry name" value="lon"/>
    <property type="match status" value="1"/>
</dbReference>
<dbReference type="PANTHER" id="PTHR43718">
    <property type="entry name" value="LON PROTEASE"/>
    <property type="match status" value="1"/>
</dbReference>
<dbReference type="PANTHER" id="PTHR43718:SF2">
    <property type="entry name" value="LON PROTEASE HOMOLOG, MITOCHONDRIAL"/>
    <property type="match status" value="1"/>
</dbReference>
<dbReference type="Pfam" id="PF00004">
    <property type="entry name" value="AAA"/>
    <property type="match status" value="1"/>
</dbReference>
<dbReference type="Pfam" id="PF05362">
    <property type="entry name" value="Lon_C"/>
    <property type="match status" value="1"/>
</dbReference>
<dbReference type="Pfam" id="PF22667">
    <property type="entry name" value="Lon_lid"/>
    <property type="match status" value="1"/>
</dbReference>
<dbReference type="Pfam" id="PF02190">
    <property type="entry name" value="LON_substr_bdg"/>
    <property type="match status" value="1"/>
</dbReference>
<dbReference type="PIRSF" id="PIRSF001174">
    <property type="entry name" value="Lon_proteas"/>
    <property type="match status" value="1"/>
</dbReference>
<dbReference type="PRINTS" id="PR00830">
    <property type="entry name" value="ENDOLAPTASE"/>
</dbReference>
<dbReference type="SMART" id="SM00382">
    <property type="entry name" value="AAA"/>
    <property type="match status" value="1"/>
</dbReference>
<dbReference type="SMART" id="SM00464">
    <property type="entry name" value="LON"/>
    <property type="match status" value="1"/>
</dbReference>
<dbReference type="SUPFAM" id="SSF52540">
    <property type="entry name" value="P-loop containing nucleoside triphosphate hydrolases"/>
    <property type="match status" value="1"/>
</dbReference>
<dbReference type="SUPFAM" id="SSF88697">
    <property type="entry name" value="PUA domain-like"/>
    <property type="match status" value="1"/>
</dbReference>
<dbReference type="SUPFAM" id="SSF54211">
    <property type="entry name" value="Ribosomal protein S5 domain 2-like"/>
    <property type="match status" value="1"/>
</dbReference>
<dbReference type="PROSITE" id="PS51787">
    <property type="entry name" value="LON_N"/>
    <property type="match status" value="1"/>
</dbReference>
<dbReference type="PROSITE" id="PS51786">
    <property type="entry name" value="LON_PROTEOLYTIC"/>
    <property type="match status" value="1"/>
</dbReference>
<dbReference type="PROSITE" id="PS01046">
    <property type="entry name" value="LON_SER"/>
    <property type="match status" value="1"/>
</dbReference>
<name>LON1_SYNC1</name>
<keyword id="KW-0067">ATP-binding</keyword>
<keyword id="KW-0963">Cytoplasm</keyword>
<keyword id="KW-0378">Hydrolase</keyword>
<keyword id="KW-0547">Nucleotide-binding</keyword>
<keyword id="KW-0645">Protease</keyword>
<keyword id="KW-1185">Reference proteome</keyword>
<keyword id="KW-0720">Serine protease</keyword>
<keyword id="KW-0346">Stress response</keyword>